<dbReference type="EMBL" id="AE004439">
    <property type="protein sequence ID" value="AAK03155.1"/>
    <property type="molecule type" value="Genomic_DNA"/>
</dbReference>
<dbReference type="RefSeq" id="WP_005723238.1">
    <property type="nucleotide sequence ID" value="NC_002663.1"/>
</dbReference>
<dbReference type="SMR" id="Q9CLX8"/>
<dbReference type="STRING" id="272843.PM1071"/>
<dbReference type="EnsemblBacteria" id="AAK03155">
    <property type="protein sequence ID" value="AAK03155"/>
    <property type="gene ID" value="PM1071"/>
</dbReference>
<dbReference type="KEGG" id="pmu:PM1071"/>
<dbReference type="HOGENOM" id="CLU_035023_3_1_6"/>
<dbReference type="OrthoDB" id="5166626at2"/>
<dbReference type="Proteomes" id="UP000000809">
    <property type="component" value="Chromosome"/>
</dbReference>
<dbReference type="GO" id="GO:0005886">
    <property type="term" value="C:plasma membrane"/>
    <property type="evidence" value="ECO:0007669"/>
    <property type="project" value="UniProtKB-SubCell"/>
</dbReference>
<dbReference type="GO" id="GO:0008324">
    <property type="term" value="F:monoatomic cation transmembrane transporter activity"/>
    <property type="evidence" value="ECO:0007669"/>
    <property type="project" value="InterPro"/>
</dbReference>
<dbReference type="GO" id="GO:0006813">
    <property type="term" value="P:potassium ion transport"/>
    <property type="evidence" value="ECO:0007669"/>
    <property type="project" value="InterPro"/>
</dbReference>
<dbReference type="Gene3D" id="3.30.70.1450">
    <property type="entry name" value="Regulator of K+ conductance, C-terminal domain"/>
    <property type="match status" value="2"/>
</dbReference>
<dbReference type="HAMAP" id="MF_01016">
    <property type="entry name" value="YidE"/>
    <property type="match status" value="1"/>
</dbReference>
<dbReference type="InterPro" id="IPR050144">
    <property type="entry name" value="AAE_transporter"/>
</dbReference>
<dbReference type="InterPro" id="IPR006037">
    <property type="entry name" value="RCK_C"/>
</dbReference>
<dbReference type="InterPro" id="IPR036721">
    <property type="entry name" value="RCK_C_sf"/>
</dbReference>
<dbReference type="InterPro" id="IPR023018">
    <property type="entry name" value="Transpt_YidE_put"/>
</dbReference>
<dbReference type="InterPro" id="IPR006512">
    <property type="entry name" value="YidE_YbjL"/>
</dbReference>
<dbReference type="NCBIfam" id="NF003007">
    <property type="entry name" value="PRK03818.1"/>
    <property type="match status" value="1"/>
</dbReference>
<dbReference type="NCBIfam" id="TIGR01625">
    <property type="entry name" value="YidE_YbjL_dupl"/>
    <property type="match status" value="2"/>
</dbReference>
<dbReference type="PANTHER" id="PTHR30445">
    <property type="entry name" value="K(+)_H(+) ANTIPORTER SUBUNIT KHTT"/>
    <property type="match status" value="1"/>
</dbReference>
<dbReference type="PANTHER" id="PTHR30445:SF3">
    <property type="entry name" value="TRANSPORT PROTEIN YIDE-RELATED"/>
    <property type="match status" value="1"/>
</dbReference>
<dbReference type="Pfam" id="PF06826">
    <property type="entry name" value="Asp-Al_Ex"/>
    <property type="match status" value="2"/>
</dbReference>
<dbReference type="Pfam" id="PF02080">
    <property type="entry name" value="TrkA_C"/>
    <property type="match status" value="2"/>
</dbReference>
<dbReference type="SUPFAM" id="SSF116726">
    <property type="entry name" value="TrkA C-terminal domain-like"/>
    <property type="match status" value="2"/>
</dbReference>
<dbReference type="PROSITE" id="PS51202">
    <property type="entry name" value="RCK_C"/>
    <property type="match status" value="2"/>
</dbReference>
<reference key="1">
    <citation type="journal article" date="2001" name="Proc. Natl. Acad. Sci. U.S.A.">
        <title>Complete genomic sequence of Pasteurella multocida Pm70.</title>
        <authorList>
            <person name="May B.J."/>
            <person name="Zhang Q."/>
            <person name="Li L.L."/>
            <person name="Paustian M.L."/>
            <person name="Whittam T.S."/>
            <person name="Kapur V."/>
        </authorList>
    </citation>
    <scope>NUCLEOTIDE SEQUENCE [LARGE SCALE GENOMIC DNA]</scope>
    <source>
        <strain>Pm70</strain>
    </source>
</reference>
<name>Y1071_PASMU</name>
<gene>
    <name type="ordered locus">PM1071</name>
</gene>
<protein>
    <recommendedName>
        <fullName evidence="1">Putative transport protein PM1071</fullName>
    </recommendedName>
</protein>
<organism>
    <name type="scientific">Pasteurella multocida (strain Pm70)</name>
    <dbReference type="NCBI Taxonomy" id="272843"/>
    <lineage>
        <taxon>Bacteria</taxon>
        <taxon>Pseudomonadati</taxon>
        <taxon>Pseudomonadota</taxon>
        <taxon>Gammaproteobacteria</taxon>
        <taxon>Pasteurellales</taxon>
        <taxon>Pasteurellaceae</taxon>
        <taxon>Pasteurella</taxon>
    </lineage>
</organism>
<proteinExistence type="inferred from homology"/>
<keyword id="KW-1003">Cell membrane</keyword>
<keyword id="KW-0472">Membrane</keyword>
<keyword id="KW-1185">Reference proteome</keyword>
<keyword id="KW-0677">Repeat</keyword>
<keyword id="KW-0812">Transmembrane</keyword>
<keyword id="KW-1133">Transmembrane helix</keyword>
<keyword id="KW-0813">Transport</keyword>
<sequence>MSDIAITISLLALVAVIGLWIGHWKIRGVGLGIGGVLFGGIIVAHFTNQYGLKLDAHTMHFIQEFGLILFVYTIGIQVGPGFFASLRQSGLKLNGFAALIVLLGSLAVIVIHKLADVPLDIILGIYSGAVTNTPSLGAGQQILSELGLTQTTSTMGMAYAMAYPFGICGILLSMWLIRLFFRIKIDDEAKNFLKESGQDKETLGSINVRVTNPNLDGLRLVDIPGFDEKRDVVCTRLKRDEHISVPQANTIIQKGDLLHLVGEIPLLRKIKLVLGEEVDVPLSSFTGDLRSDRIVVTNEKVLGKKIRALGIHQKYGVVISRLNRAGVELVPTANTALQFGDVLHVVGRSEVLNQAVSILGNAQQKLQQVQMLPVFIGIGLGVLLGSIPFHIPGFPVPLKLGLAGGPLVVALILARIGSIGKLYWFMPPSANLALREIGIVLFLAVVGLKSGGNFVDTLVNGSGLEWMVYGIFITFVPLMIVGIVARLYAKMNYLSLCGLLAGSMTDPPALAFANAIKEESGASALSYATVYPLVMFLRIISPQLLAILLWTLL</sequence>
<evidence type="ECO:0000255" key="1">
    <source>
        <dbReference type="HAMAP-Rule" id="MF_01016"/>
    </source>
</evidence>
<comment type="subcellular location">
    <subcellularLocation>
        <location evidence="1">Cell membrane</location>
        <topology evidence="1">Multi-pass membrane protein</topology>
    </subcellularLocation>
</comment>
<comment type="similarity">
    <text evidence="1">Belongs to the AAE transporter (TC 2.A.81) family. YidE subfamily.</text>
</comment>
<feature type="chain" id="PRO_0000208802" description="Putative transport protein PM1071">
    <location>
        <begin position="1"/>
        <end position="553"/>
    </location>
</feature>
<feature type="transmembrane region" description="Helical" evidence="1">
    <location>
        <begin position="4"/>
        <end position="24"/>
    </location>
</feature>
<feature type="transmembrane region" description="Helical" evidence="1">
    <location>
        <begin position="28"/>
        <end position="48"/>
    </location>
</feature>
<feature type="transmembrane region" description="Helical" evidence="1">
    <location>
        <begin position="65"/>
        <end position="85"/>
    </location>
</feature>
<feature type="transmembrane region" description="Helical" evidence="1">
    <location>
        <begin position="91"/>
        <end position="111"/>
    </location>
</feature>
<feature type="transmembrane region" description="Helical" evidence="1">
    <location>
        <begin position="157"/>
        <end position="177"/>
    </location>
</feature>
<feature type="transmembrane region" description="Helical" evidence="1">
    <location>
        <begin position="371"/>
        <end position="391"/>
    </location>
</feature>
<feature type="transmembrane region" description="Helical" evidence="1">
    <location>
        <begin position="403"/>
        <end position="425"/>
    </location>
</feature>
<feature type="transmembrane region" description="Helical" evidence="1">
    <location>
        <begin position="439"/>
        <end position="459"/>
    </location>
</feature>
<feature type="transmembrane region" description="Helical" evidence="1">
    <location>
        <begin position="464"/>
        <end position="484"/>
    </location>
</feature>
<feature type="transmembrane region" description="Helical" evidence="1">
    <location>
        <begin position="496"/>
        <end position="516"/>
    </location>
</feature>
<feature type="transmembrane region" description="Helical" evidence="1">
    <location>
        <begin position="533"/>
        <end position="553"/>
    </location>
</feature>
<feature type="domain" description="RCK C-terminal 1" evidence="1">
    <location>
        <begin position="190"/>
        <end position="276"/>
    </location>
</feature>
<feature type="domain" description="RCK C-terminal 2" evidence="1">
    <location>
        <begin position="277"/>
        <end position="361"/>
    </location>
</feature>
<accession>Q9CLX8</accession>